<comment type="function">
    <text evidence="4 5">Stabilizing subunit of the ethanolamine phosphate transferase 3 and ethanolamine phosphate transferase 2 complexes that sequentially transfer an ethanolamine phosphate (EtNP) from a phosphatidylethanolamine (PE) to the 6-OH position of the third alpha-1,2-linked mannose and the second alpha-1,6-linked mannose of the alpha-D-Man-(1-&gt;2)-alpha-D-Man-(1-&gt;6)-2-PEtn-alpha-D-Man-(1-&gt;4)-alpha-D-GlcN-(1-&gt;6)-(1-radyl,2-acyl-sn-glycero-3-phospho)-2-acyl-inositol (also termed H6) intermediate to generate a 6-PEtn-alpha-D-Man-(1-&gt;2)-6-PEtn-alpha-D-Man-(1-&gt;6)-2-PEtn-alpha-D-Man-(1-&gt;4)-alpha-D-GlcN-(1-&gt;6)-(1-radyl,2-acyl-sn-glycero-3-phospho)-2-acyl-inositol (also termed H8) (PubMed:15632136). Participates in the tenth and eleventh steps of the glycosylphosphatidylinositol-anchor biosynthesis, in association with PIGO and PIGG, respectively (PubMed:15632136, PubMed:33386993).</text>
</comment>
<comment type="pathway">
    <text evidence="4">Glycolipid biosynthesis; glycosylphosphatidylinositol-anchor biosynthesis.</text>
</comment>
<comment type="subunit">
    <text evidence="2 4">Part of the ethanolamine phosphate transferase 3 complex composed by PIGO and PIGF (By similarity). Part of the ethanolamine phosphate transferase 2 complex with PIGG (PubMed:15632136). PIGF is required to stabilize PIGG and PIGO (PubMed:15632136).</text>
</comment>
<comment type="interaction">
    <interactant intactId="EBI-17180304">
        <id>Q07326</id>
    </interactant>
    <interactant intactId="EBI-13059134">
        <id>Q13520</id>
        <label>AQP6</label>
    </interactant>
    <organismsDiffer>false</organismsDiffer>
    <experiments>3</experiments>
</comment>
<comment type="interaction">
    <interactant intactId="EBI-17180304">
        <id>Q07326</id>
    </interactant>
    <interactant intactId="EBI-13345167">
        <id>Q8TDT2</id>
        <label>GPR152</label>
    </interactant>
    <organismsDiffer>false</organismsDiffer>
    <experiments>3</experiments>
</comment>
<comment type="interaction">
    <interactant intactId="EBI-17180304">
        <id>Q07326</id>
    </interactant>
    <interactant intactId="EBI-10329546">
        <id>Q9Y5Y7</id>
        <label>LYVE1</label>
    </interactant>
    <organismsDiffer>false</organismsDiffer>
    <experiments>3</experiments>
</comment>
<comment type="interaction">
    <interactant intactId="EBI-17180304">
        <id>Q07326</id>
    </interactant>
    <interactant intactId="EBI-3867271">
        <id>Q9NQG1</id>
        <label>MANBAL</label>
    </interactant>
    <organismsDiffer>false</organismsDiffer>
    <experiments>3</experiments>
</comment>
<comment type="interaction">
    <interactant intactId="EBI-17180304">
        <id>Q07326</id>
    </interactant>
    <interactant intactId="EBI-6268651">
        <id>Q9NPL8</id>
        <label>TIMMDC1</label>
    </interactant>
    <organismsDiffer>false</organismsDiffer>
    <experiments>3</experiments>
</comment>
<comment type="interaction">
    <interactant intactId="EBI-17180304">
        <id>Q07326</id>
    </interactant>
    <interactant intactId="EBI-19763514">
        <id>Q8N3G9</id>
        <label>TMEM130</label>
    </interactant>
    <organismsDiffer>false</organismsDiffer>
    <experiments>3</experiments>
</comment>
<comment type="interaction">
    <interactant intactId="EBI-17180304">
        <id>Q07326</id>
    </interactant>
    <interactant intactId="EBI-8638294">
        <id>Q9NUH8</id>
        <label>TMEM14B</label>
    </interactant>
    <organismsDiffer>false</organismsDiffer>
    <experiments>3</experiments>
</comment>
<comment type="interaction">
    <interactant intactId="EBI-17180304">
        <id>Q07326</id>
    </interactant>
    <interactant intactId="EBI-2548832">
        <id>Q8N661</id>
        <label>TMEM86B</label>
    </interactant>
    <organismsDiffer>false</organismsDiffer>
    <experiments>3</experiments>
</comment>
<comment type="subcellular location">
    <subcellularLocation>
        <location evidence="1">Endoplasmic reticulum membrane</location>
        <topology evidence="1">Multi-pass membrane protein</topology>
    </subcellularLocation>
</comment>
<comment type="alternative products">
    <event type="alternative splicing"/>
    <isoform>
        <id>Q07326-1</id>
        <name>1</name>
        <sequence type="displayed"/>
    </isoform>
    <isoform>
        <id>Q07326-2</id>
        <name>2</name>
        <sequence type="described" ref="VSP_004361"/>
    </isoform>
</comment>
<comment type="disease" evidence="5">
    <disease id="DI-06139">
        <name>Onychodystrophy, osteodystrophy, impaired intellectual development, and seizures syndrome</name>
        <acronym>OORS</acronym>
        <description>An autosomal recessive disorder characterized by global developmental delay, impaired intellectual development, seizures or tonic posturing, dysmorphic facial features, and hypoplastic terminal phalanges and nails.</description>
        <dbReference type="MIM" id="619356"/>
    </disease>
    <text>The disease is caused by variants affecting the gene represented in this entry.</text>
</comment>
<comment type="similarity">
    <text evidence="7">Belongs to the PIGF family.</text>
</comment>
<dbReference type="EMBL" id="D13435">
    <property type="protein sequence ID" value="BAA02697.1"/>
    <property type="molecule type" value="mRNA"/>
</dbReference>
<dbReference type="EMBL" id="BC021725">
    <property type="protein sequence ID" value="AAH21725.1"/>
    <property type="molecule type" value="mRNA"/>
</dbReference>
<dbReference type="EMBL" id="BC029408">
    <property type="protein sequence ID" value="AAH29408.1"/>
    <property type="molecule type" value="mRNA"/>
</dbReference>
<dbReference type="CCDS" id="CCDS1827.1">
    <molecule id="Q07326-1"/>
</dbReference>
<dbReference type="CCDS" id="CCDS1828.1">
    <molecule id="Q07326-2"/>
</dbReference>
<dbReference type="PIR" id="A46097">
    <property type="entry name" value="A46097"/>
</dbReference>
<dbReference type="RefSeq" id="NP_002634.1">
    <molecule id="Q07326-1"/>
    <property type="nucleotide sequence ID" value="NM_002643.4"/>
</dbReference>
<dbReference type="RefSeq" id="NP_775097.1">
    <molecule id="Q07326-2"/>
    <property type="nucleotide sequence ID" value="NM_173074.3"/>
</dbReference>
<dbReference type="BioGRID" id="111299">
    <property type="interactions" value="26"/>
</dbReference>
<dbReference type="ComplexPortal" id="CPX-2677">
    <property type="entry name" value="Glycosylphosphatidylinsitol ethanolamine-phosphate transferase II complex"/>
</dbReference>
<dbReference type="ComplexPortal" id="CPX-2679">
    <property type="entry name" value="Glycosylphosphatidylinsitol ethanolamine-phosphate transferase III complex"/>
</dbReference>
<dbReference type="FunCoup" id="Q07326">
    <property type="interactions" value="482"/>
</dbReference>
<dbReference type="IntAct" id="Q07326">
    <property type="interactions" value="26"/>
</dbReference>
<dbReference type="STRING" id="9606.ENSP00000281382"/>
<dbReference type="BioMuta" id="PIGF"/>
<dbReference type="DMDM" id="730326"/>
<dbReference type="MassIVE" id="Q07326"/>
<dbReference type="PaxDb" id="9606-ENSP00000281382"/>
<dbReference type="PeptideAtlas" id="Q07326"/>
<dbReference type="Antibodypedia" id="29978">
    <property type="antibodies" value="98 antibodies from 24 providers"/>
</dbReference>
<dbReference type="DNASU" id="5281"/>
<dbReference type="Ensembl" id="ENST00000281382.11">
    <molecule id="Q07326-1"/>
    <property type="protein sequence ID" value="ENSP00000281382.6"/>
    <property type="gene ID" value="ENSG00000151665.13"/>
</dbReference>
<dbReference type="Ensembl" id="ENST00000306465.8">
    <molecule id="Q07326-2"/>
    <property type="protein sequence ID" value="ENSP00000302663.4"/>
    <property type="gene ID" value="ENSG00000151665.13"/>
</dbReference>
<dbReference type="GeneID" id="5281"/>
<dbReference type="KEGG" id="hsa:5281"/>
<dbReference type="MANE-Select" id="ENST00000281382.11">
    <property type="protein sequence ID" value="ENSP00000281382.6"/>
    <property type="RefSeq nucleotide sequence ID" value="NM_002643.4"/>
    <property type="RefSeq protein sequence ID" value="NP_002634.1"/>
</dbReference>
<dbReference type="UCSC" id="uc002rvc.4">
    <molecule id="Q07326-1"/>
    <property type="organism name" value="human"/>
</dbReference>
<dbReference type="AGR" id="HGNC:8962"/>
<dbReference type="CTD" id="5281"/>
<dbReference type="DisGeNET" id="5281"/>
<dbReference type="GeneCards" id="PIGF"/>
<dbReference type="HGNC" id="HGNC:8962">
    <property type="gene designation" value="PIGF"/>
</dbReference>
<dbReference type="HPA" id="ENSG00000151665">
    <property type="expression patterns" value="Low tissue specificity"/>
</dbReference>
<dbReference type="MalaCards" id="PIGF"/>
<dbReference type="MIM" id="600153">
    <property type="type" value="gene"/>
</dbReference>
<dbReference type="MIM" id="619356">
    <property type="type" value="phenotype"/>
</dbReference>
<dbReference type="neXtProt" id="NX_Q07326"/>
<dbReference type="OpenTargets" id="ENSG00000151665"/>
<dbReference type="PharmGKB" id="PA33293"/>
<dbReference type="VEuPathDB" id="HostDB:ENSG00000151665"/>
<dbReference type="eggNOG" id="KOG3144">
    <property type="taxonomic scope" value="Eukaryota"/>
</dbReference>
<dbReference type="GeneTree" id="ENSGT00390000016617"/>
<dbReference type="HOGENOM" id="CLU_1261153_0_0_1"/>
<dbReference type="InParanoid" id="Q07326"/>
<dbReference type="OMA" id="DHEIKAM"/>
<dbReference type="OrthoDB" id="17366at2759"/>
<dbReference type="PAN-GO" id="Q07326">
    <property type="GO annotations" value="3 GO annotations based on evolutionary models"/>
</dbReference>
<dbReference type="PhylomeDB" id="Q07326"/>
<dbReference type="TreeFam" id="TF323878"/>
<dbReference type="PathwayCommons" id="Q07326"/>
<dbReference type="Reactome" id="R-HSA-162710">
    <property type="pathway name" value="Synthesis of glycosylphosphatidylinositol (GPI)"/>
</dbReference>
<dbReference type="SignaLink" id="Q07326"/>
<dbReference type="SIGNOR" id="Q07326"/>
<dbReference type="UniPathway" id="UPA00196"/>
<dbReference type="BioGRID-ORCS" id="5281">
    <property type="hits" value="19 hits in 1150 CRISPR screens"/>
</dbReference>
<dbReference type="ChiTaRS" id="PIGF">
    <property type="organism name" value="human"/>
</dbReference>
<dbReference type="GeneWiki" id="PIGF"/>
<dbReference type="GenomeRNAi" id="5281"/>
<dbReference type="Pharos" id="Q07326">
    <property type="development level" value="Tbio"/>
</dbReference>
<dbReference type="PRO" id="PR:Q07326"/>
<dbReference type="Proteomes" id="UP000005640">
    <property type="component" value="Chromosome 2"/>
</dbReference>
<dbReference type="RNAct" id="Q07326">
    <property type="molecule type" value="protein"/>
</dbReference>
<dbReference type="Bgee" id="ENSG00000151665">
    <property type="expression patterns" value="Expressed in oocyte and 187 other cell types or tissues"/>
</dbReference>
<dbReference type="ExpressionAtlas" id="Q07326">
    <property type="expression patterns" value="baseline and differential"/>
</dbReference>
<dbReference type="GO" id="GO:0005789">
    <property type="term" value="C:endoplasmic reticulum membrane"/>
    <property type="evidence" value="ECO:0000250"/>
    <property type="project" value="UniProtKB"/>
</dbReference>
<dbReference type="GO" id="GO:0004307">
    <property type="term" value="F:ethanolaminephosphotransferase activity"/>
    <property type="evidence" value="ECO:0000304"/>
    <property type="project" value="ProtInc"/>
</dbReference>
<dbReference type="GO" id="GO:0006506">
    <property type="term" value="P:GPI anchor biosynthetic process"/>
    <property type="evidence" value="ECO:0000315"/>
    <property type="project" value="UniProtKB"/>
</dbReference>
<dbReference type="InterPro" id="IPR009580">
    <property type="entry name" value="GPI_biosynthesis_protein_Pig-F"/>
</dbReference>
<dbReference type="Pfam" id="PF06699">
    <property type="entry name" value="PIG-F"/>
    <property type="match status" value="1"/>
</dbReference>
<reference key="1">
    <citation type="journal article" date="1993" name="J. Biol. Chem.">
        <title>Cloning of a human gene, PIG-F, a component of glycosylphosphatidylinositol anchor biosynthesis, by a novel expression cloning strategy.</title>
        <authorList>
            <person name="Inoue N."/>
            <person name="Kinoshita T."/>
            <person name="Orii T."/>
            <person name="Takeda J."/>
        </authorList>
    </citation>
    <scope>NUCLEOTIDE SEQUENCE [MRNA] (ISOFORM 1)</scope>
</reference>
<reference key="2">
    <citation type="journal article" date="2004" name="Genome Res.">
        <title>The status, quality, and expansion of the NIH full-length cDNA project: the Mammalian Gene Collection (MGC).</title>
        <authorList>
            <consortium name="The MGC Project Team"/>
        </authorList>
    </citation>
    <scope>NUCLEOTIDE SEQUENCE [LARGE SCALE MRNA] (ISOFORMS 1 AND 2)</scope>
    <source>
        <tissue>Testis</tissue>
    </source>
</reference>
<reference key="3">
    <citation type="journal article" date="2005" name="J. Biol. Chem.">
        <title>GPI7 is the second partner of PIG-F and involved in modification of glycosylphosphatidylinositol.</title>
        <authorList>
            <person name="Shishioh N."/>
            <person name="Hong Y."/>
            <person name="Ohishi K."/>
            <person name="Ashida H."/>
            <person name="Maeda Y."/>
            <person name="Kinoshita T."/>
        </authorList>
    </citation>
    <scope>FUNCTION</scope>
    <scope>INTERACTION WITH PIGG</scope>
</reference>
<reference key="4">
    <citation type="journal article" date="2012" name="Proc. Natl. Acad. Sci. U.S.A.">
        <title>N-terminal acetylome analyses and functional insights of the N-terminal acetyltransferase NatB.</title>
        <authorList>
            <person name="Van Damme P."/>
            <person name="Lasa M."/>
            <person name="Polevoda B."/>
            <person name="Gazquez C."/>
            <person name="Elosegui-Artola A."/>
            <person name="Kim D.S."/>
            <person name="De Juan-Pardo E."/>
            <person name="Demeyer K."/>
            <person name="Hole K."/>
            <person name="Larrea E."/>
            <person name="Timmerman E."/>
            <person name="Prieto J."/>
            <person name="Arnesen T."/>
            <person name="Sherman F."/>
            <person name="Gevaert K."/>
            <person name="Aldabe R."/>
        </authorList>
    </citation>
    <scope>IDENTIFICATION BY MASS SPECTROMETRY [LARGE SCALE ANALYSIS]</scope>
</reference>
<reference key="5">
    <citation type="journal article" date="2021" name="Hum. Genet.">
        <title>PIGF deficiency causes a phenotype overlapping with DOORS syndrome.</title>
        <authorList>
            <person name="Salian S."/>
            <person name="Benkerroum H."/>
            <person name="Nguyen T.T.M."/>
            <person name="Nampoothiri S."/>
            <person name="Kinoshita T."/>
            <person name="Felix T.M."/>
            <person name="Stewart F."/>
            <person name="Sisodiya S.M."/>
            <person name="Murakami Y."/>
            <person name="Campeau P.M."/>
        </authorList>
    </citation>
    <scope>INVOLVEMENT IN OORS</scope>
    <scope>FUNCTION</scope>
    <scope>VARIANT OORS ARG-172</scope>
    <scope>CHARACTERIZATION OF VARIANT OORS ARG-172</scope>
</reference>
<protein>
    <recommendedName>
        <fullName evidence="7">GPI ethanolamine phosphate transferase, stabilizing subunit</fullName>
    </recommendedName>
    <alternativeName>
        <fullName evidence="7">GPI ethanolamine phosphate transferase 2, stabilizing subunit</fullName>
    </alternativeName>
    <alternativeName>
        <fullName evidence="7">GPI ethanolamine phosphate transferase 3, stabilizing subunit</fullName>
    </alternativeName>
    <alternativeName>
        <fullName>GPI11 homolog</fullName>
    </alternativeName>
    <alternativeName>
        <fullName>Phosphatidylinositol-glycan biosynthesis class F protein</fullName>
        <shortName>PIG-F</shortName>
    </alternativeName>
</protein>
<proteinExistence type="evidence at protein level"/>
<sequence length="219" mass="24890">MKDNDIKRLLYTHLLCIFSIILSVFIPSLFLENFSILETHLTWLCICSGFVTAVNLVLYLVVKPNTSSKRSSLSHKVTGFLKCCIYFLMSCFSFHVIFVLYGAPLIELALETFLFAVILSTFTTVPCLCLLGPNLKAWLRVFSRNGVTSIWENSLQITTISSFVGAWLGALPIPLDWERPWQVWPISCTLGATFGYVAGLVISPLWIYWNRKQLTYKNN</sequence>
<name>PIGF_HUMAN</name>
<evidence type="ECO:0000250" key="1"/>
<evidence type="ECO:0000250" key="2">
    <source>
        <dbReference type="UniProtKB" id="O09101"/>
    </source>
</evidence>
<evidence type="ECO:0000255" key="3"/>
<evidence type="ECO:0000269" key="4">
    <source>
    </source>
</evidence>
<evidence type="ECO:0000269" key="5">
    <source>
    </source>
</evidence>
<evidence type="ECO:0000303" key="6">
    <source>
    </source>
</evidence>
<evidence type="ECO:0000305" key="7"/>
<evidence type="ECO:0000312" key="8">
    <source>
        <dbReference type="HGNC" id="HGNC:8962"/>
    </source>
</evidence>
<gene>
    <name evidence="8" type="primary">PIGF</name>
</gene>
<feature type="chain" id="PRO_0000191759" description="GPI ethanolamine phosphate transferase, stabilizing subunit">
    <location>
        <begin position="1"/>
        <end position="219"/>
    </location>
</feature>
<feature type="transmembrane region" description="Helical" evidence="3">
    <location>
        <begin position="11"/>
        <end position="31"/>
    </location>
</feature>
<feature type="transmembrane region" description="Helical" evidence="3">
    <location>
        <begin position="42"/>
        <end position="62"/>
    </location>
</feature>
<feature type="transmembrane region" description="Helical" evidence="3">
    <location>
        <begin position="86"/>
        <end position="106"/>
    </location>
</feature>
<feature type="transmembrane region" description="Helical" evidence="3">
    <location>
        <begin position="113"/>
        <end position="133"/>
    </location>
</feature>
<feature type="transmembrane region" description="Helical" evidence="3">
    <location>
        <begin position="155"/>
        <end position="175"/>
    </location>
</feature>
<feature type="transmembrane region" description="Helical" evidence="3">
    <location>
        <begin position="189"/>
        <end position="209"/>
    </location>
</feature>
<feature type="splice variant" id="VSP_004361" description="In isoform 2." evidence="6">
    <original>VWPISCTLGATFGYVAGLVISPLWIYWNRKQLTYKNN</original>
    <variation>MTVERKRSTYRSLHVPCRGLGTVK</variation>
    <location>
        <begin position="183"/>
        <end position="219"/>
    </location>
</feature>
<feature type="sequence variant" id="VAR_085810" description="In OORS; defective GPI anchor biosynthesis in homozygous patient cells; dbSNP:rs2104079531." evidence="5">
    <original>P</original>
    <variation>R</variation>
    <location>
        <position position="172"/>
    </location>
</feature>
<organism>
    <name type="scientific">Homo sapiens</name>
    <name type="common">Human</name>
    <dbReference type="NCBI Taxonomy" id="9606"/>
    <lineage>
        <taxon>Eukaryota</taxon>
        <taxon>Metazoa</taxon>
        <taxon>Chordata</taxon>
        <taxon>Craniata</taxon>
        <taxon>Vertebrata</taxon>
        <taxon>Euteleostomi</taxon>
        <taxon>Mammalia</taxon>
        <taxon>Eutheria</taxon>
        <taxon>Euarchontoglires</taxon>
        <taxon>Primates</taxon>
        <taxon>Haplorrhini</taxon>
        <taxon>Catarrhini</taxon>
        <taxon>Hominidae</taxon>
        <taxon>Homo</taxon>
    </lineage>
</organism>
<accession>Q07326</accession>
<accession>Q8WW20</accession>
<keyword id="KW-0025">Alternative splicing</keyword>
<keyword id="KW-0225">Disease variant</keyword>
<keyword id="KW-0256">Endoplasmic reticulum</keyword>
<keyword id="KW-0887">Epilepsy</keyword>
<keyword id="KW-0337">GPI-anchor biosynthesis</keyword>
<keyword id="KW-0991">Intellectual disability</keyword>
<keyword id="KW-0472">Membrane</keyword>
<keyword id="KW-1185">Reference proteome</keyword>
<keyword id="KW-0812">Transmembrane</keyword>
<keyword id="KW-1133">Transmembrane helix</keyword>